<protein>
    <recommendedName>
        <fullName evidence="1">Ribosomal RNA small subunit methyltransferase H</fullName>
        <ecNumber evidence="1">2.1.1.199</ecNumber>
    </recommendedName>
    <alternativeName>
        <fullName evidence="1">16S rRNA m(4)C1402 methyltransferase</fullName>
    </alternativeName>
    <alternativeName>
        <fullName evidence="1">rRNA (cytosine-N(4)-)-methyltransferase RsmH</fullName>
    </alternativeName>
</protein>
<feature type="chain" id="PRO_0000386934" description="Ribosomal RNA small subunit methyltransferase H">
    <location>
        <begin position="1"/>
        <end position="391"/>
    </location>
</feature>
<feature type="region of interest" description="Disordered" evidence="2">
    <location>
        <begin position="1"/>
        <end position="23"/>
    </location>
</feature>
<feature type="region of interest" description="Disordered" evidence="2">
    <location>
        <begin position="284"/>
        <end position="391"/>
    </location>
</feature>
<feature type="compositionally biased region" description="Basic and acidic residues" evidence="2">
    <location>
        <begin position="368"/>
        <end position="380"/>
    </location>
</feature>
<feature type="binding site" evidence="1">
    <location>
        <begin position="59"/>
        <end position="61"/>
    </location>
    <ligand>
        <name>S-adenosyl-L-methionine</name>
        <dbReference type="ChEBI" id="CHEBI:59789"/>
    </ligand>
</feature>
<feature type="binding site" evidence="1">
    <location>
        <position position="78"/>
    </location>
    <ligand>
        <name>S-adenosyl-L-methionine</name>
        <dbReference type="ChEBI" id="CHEBI:59789"/>
    </ligand>
</feature>
<feature type="binding site" evidence="1">
    <location>
        <position position="112"/>
    </location>
    <ligand>
        <name>S-adenosyl-L-methionine</name>
        <dbReference type="ChEBI" id="CHEBI:59789"/>
    </ligand>
</feature>
<feature type="binding site" evidence="1">
    <location>
        <position position="126"/>
    </location>
    <ligand>
        <name>S-adenosyl-L-methionine</name>
        <dbReference type="ChEBI" id="CHEBI:59789"/>
    </ligand>
</feature>
<feature type="binding site" evidence="1">
    <location>
        <position position="133"/>
    </location>
    <ligand>
        <name>S-adenosyl-L-methionine</name>
        <dbReference type="ChEBI" id="CHEBI:59789"/>
    </ligand>
</feature>
<organism>
    <name type="scientific">Kineococcus radiotolerans (strain ATCC BAA-149 / DSM 14245 / SRS30216)</name>
    <dbReference type="NCBI Taxonomy" id="266940"/>
    <lineage>
        <taxon>Bacteria</taxon>
        <taxon>Bacillati</taxon>
        <taxon>Actinomycetota</taxon>
        <taxon>Actinomycetes</taxon>
        <taxon>Kineosporiales</taxon>
        <taxon>Kineosporiaceae</taxon>
        <taxon>Kineococcus</taxon>
    </lineage>
</organism>
<gene>
    <name evidence="1" type="primary">rsmH</name>
    <name type="synonym">mraW</name>
    <name type="ordered locus">Krad_3207</name>
</gene>
<proteinExistence type="inferred from homology"/>
<reference key="1">
    <citation type="journal article" date="2008" name="PLoS ONE">
        <title>Survival in nuclear waste, extreme resistance, and potential applications gleaned from the genome sequence of Kineococcus radiotolerans SRS30216.</title>
        <authorList>
            <person name="Bagwell C.E."/>
            <person name="Bhat S."/>
            <person name="Hawkins G.M."/>
            <person name="Smith B.W."/>
            <person name="Biswas T."/>
            <person name="Hoover T.R."/>
            <person name="Saunders E."/>
            <person name="Han C.S."/>
            <person name="Tsodikov O.V."/>
            <person name="Shimkets L.J."/>
        </authorList>
    </citation>
    <scope>NUCLEOTIDE SEQUENCE [LARGE SCALE GENOMIC DNA]</scope>
    <source>
        <strain>ATCC BAA-149 / DSM 14245 / SRS30216</strain>
    </source>
</reference>
<name>RSMH_KINRD</name>
<keyword id="KW-0963">Cytoplasm</keyword>
<keyword id="KW-0489">Methyltransferase</keyword>
<keyword id="KW-1185">Reference proteome</keyword>
<keyword id="KW-0698">rRNA processing</keyword>
<keyword id="KW-0949">S-adenosyl-L-methionine</keyword>
<keyword id="KW-0808">Transferase</keyword>
<sequence>MDVDVQDDVQGRAGEGAEERAHDAARRHASVMLERCTRVLSPALDHPGAVTVDVTLGMGGHAHELLRRHPGLRLVGMDRDPQALELAAHRLHEFADRITLVHSVSDGLGEALDDLGLDTVDAVFFDLGVSSLQLDEAERGFSYARDTALDMRMDPGAPTTAADVLNTYSHSQLTRILRVYGEERFAPRIASAIVRERALEPFTSSARLVDLVRANVPAATRRTGGNPAKRTFQALRIEVNDELGVVERSLPVAFERLAPEGRLAVLTFHSLEDRIVKNALRELSSSSAPPDLPFVPAGSGPRAELLTRGGETADEAELAENPRAASARLRAVRRLPGEDRVSSPRVVPASRRRNRPGTGTAGNPARPRTQEFETHPHLEPGEPGATVERTP</sequence>
<evidence type="ECO:0000255" key="1">
    <source>
        <dbReference type="HAMAP-Rule" id="MF_01007"/>
    </source>
</evidence>
<evidence type="ECO:0000256" key="2">
    <source>
        <dbReference type="SAM" id="MobiDB-lite"/>
    </source>
</evidence>
<accession>A6WCY2</accession>
<comment type="function">
    <text evidence="1">Specifically methylates the N4 position of cytidine in position 1402 (C1402) of 16S rRNA.</text>
</comment>
<comment type="catalytic activity">
    <reaction evidence="1">
        <text>cytidine(1402) in 16S rRNA + S-adenosyl-L-methionine = N(4)-methylcytidine(1402) in 16S rRNA + S-adenosyl-L-homocysteine + H(+)</text>
        <dbReference type="Rhea" id="RHEA:42928"/>
        <dbReference type="Rhea" id="RHEA-COMP:10286"/>
        <dbReference type="Rhea" id="RHEA-COMP:10287"/>
        <dbReference type="ChEBI" id="CHEBI:15378"/>
        <dbReference type="ChEBI" id="CHEBI:57856"/>
        <dbReference type="ChEBI" id="CHEBI:59789"/>
        <dbReference type="ChEBI" id="CHEBI:74506"/>
        <dbReference type="ChEBI" id="CHEBI:82748"/>
        <dbReference type="EC" id="2.1.1.199"/>
    </reaction>
</comment>
<comment type="subcellular location">
    <subcellularLocation>
        <location evidence="1">Cytoplasm</location>
    </subcellularLocation>
</comment>
<comment type="similarity">
    <text evidence="1">Belongs to the methyltransferase superfamily. RsmH family.</text>
</comment>
<dbReference type="EC" id="2.1.1.199" evidence="1"/>
<dbReference type="EMBL" id="CP000750">
    <property type="protein sequence ID" value="ABS04671.1"/>
    <property type="molecule type" value="Genomic_DNA"/>
</dbReference>
<dbReference type="RefSeq" id="WP_012087075.1">
    <property type="nucleotide sequence ID" value="NC_009664.2"/>
</dbReference>
<dbReference type="SMR" id="A6WCY2"/>
<dbReference type="STRING" id="266940.Krad_3207"/>
<dbReference type="KEGG" id="kra:Krad_3207"/>
<dbReference type="eggNOG" id="COG0275">
    <property type="taxonomic scope" value="Bacteria"/>
</dbReference>
<dbReference type="HOGENOM" id="CLU_038422_0_0_11"/>
<dbReference type="OrthoDB" id="9806637at2"/>
<dbReference type="Proteomes" id="UP000001116">
    <property type="component" value="Chromosome"/>
</dbReference>
<dbReference type="GO" id="GO:0005737">
    <property type="term" value="C:cytoplasm"/>
    <property type="evidence" value="ECO:0007669"/>
    <property type="project" value="UniProtKB-SubCell"/>
</dbReference>
<dbReference type="GO" id="GO:0071424">
    <property type="term" value="F:rRNA (cytosine-N4-)-methyltransferase activity"/>
    <property type="evidence" value="ECO:0007669"/>
    <property type="project" value="UniProtKB-UniRule"/>
</dbReference>
<dbReference type="GO" id="GO:0070475">
    <property type="term" value="P:rRNA base methylation"/>
    <property type="evidence" value="ECO:0007669"/>
    <property type="project" value="UniProtKB-UniRule"/>
</dbReference>
<dbReference type="FunFam" id="1.10.150.170:FF:000001">
    <property type="entry name" value="Ribosomal RNA small subunit methyltransferase H"/>
    <property type="match status" value="1"/>
</dbReference>
<dbReference type="Gene3D" id="1.10.150.170">
    <property type="entry name" value="Putative methyltransferase TM0872, insert domain"/>
    <property type="match status" value="1"/>
</dbReference>
<dbReference type="Gene3D" id="3.40.50.150">
    <property type="entry name" value="Vaccinia Virus protein VP39"/>
    <property type="match status" value="1"/>
</dbReference>
<dbReference type="HAMAP" id="MF_01007">
    <property type="entry name" value="16SrRNA_methyltr_H"/>
    <property type="match status" value="1"/>
</dbReference>
<dbReference type="InterPro" id="IPR002903">
    <property type="entry name" value="RsmH"/>
</dbReference>
<dbReference type="InterPro" id="IPR023397">
    <property type="entry name" value="SAM-dep_MeTrfase_MraW_recog"/>
</dbReference>
<dbReference type="InterPro" id="IPR029063">
    <property type="entry name" value="SAM-dependent_MTases_sf"/>
</dbReference>
<dbReference type="NCBIfam" id="TIGR00006">
    <property type="entry name" value="16S rRNA (cytosine(1402)-N(4))-methyltransferase RsmH"/>
    <property type="match status" value="1"/>
</dbReference>
<dbReference type="PANTHER" id="PTHR11265:SF0">
    <property type="entry name" value="12S RRNA N4-METHYLCYTIDINE METHYLTRANSFERASE"/>
    <property type="match status" value="1"/>
</dbReference>
<dbReference type="PANTHER" id="PTHR11265">
    <property type="entry name" value="S-ADENOSYL-METHYLTRANSFERASE MRAW"/>
    <property type="match status" value="1"/>
</dbReference>
<dbReference type="Pfam" id="PF01795">
    <property type="entry name" value="Methyltransf_5"/>
    <property type="match status" value="1"/>
</dbReference>
<dbReference type="SUPFAM" id="SSF81799">
    <property type="entry name" value="Putative methyltransferase TM0872, insert domain"/>
    <property type="match status" value="1"/>
</dbReference>
<dbReference type="SUPFAM" id="SSF53335">
    <property type="entry name" value="S-adenosyl-L-methionine-dependent methyltransferases"/>
    <property type="match status" value="1"/>
</dbReference>